<keyword id="KW-0067">ATP-binding</keyword>
<keyword id="KW-0090">Biological rhythms</keyword>
<keyword id="KW-0113">Calvin cycle</keyword>
<keyword id="KW-0150">Chloroplast</keyword>
<keyword id="KW-0903">Direct protein sequencing</keyword>
<keyword id="KW-0418">Kinase</keyword>
<keyword id="KW-0547">Nucleotide-binding</keyword>
<keyword id="KW-0934">Plastid</keyword>
<keyword id="KW-0808">Transferase</keyword>
<comment type="catalytic activity">
    <reaction evidence="2">
        <text>(2R)-3-phosphoglycerate + ATP = (2R)-3-phospho-glyceroyl phosphate + ADP</text>
        <dbReference type="Rhea" id="RHEA:14801"/>
        <dbReference type="ChEBI" id="CHEBI:30616"/>
        <dbReference type="ChEBI" id="CHEBI:57604"/>
        <dbReference type="ChEBI" id="CHEBI:58272"/>
        <dbReference type="ChEBI" id="CHEBI:456216"/>
        <dbReference type="EC" id="2.7.2.3"/>
    </reaction>
</comment>
<comment type="cofactor">
    <cofactor evidence="2">
        <name>Mg(2+)</name>
        <dbReference type="ChEBI" id="CHEBI:18420"/>
    </cofactor>
</comment>
<comment type="pathway">
    <text>Carbohydrate biosynthesis; Calvin cycle.</text>
</comment>
<comment type="subunit">
    <text evidence="1">Monomer.</text>
</comment>
<comment type="subcellular location">
    <subcellularLocation>
        <location>Plastid</location>
        <location>Chloroplast</location>
    </subcellularLocation>
</comment>
<comment type="similarity">
    <text evidence="4">Belongs to the phosphoglycerate kinase family.</text>
</comment>
<protein>
    <recommendedName>
        <fullName>Phosphoglycerate kinase, chloroplastic</fullName>
        <ecNumber evidence="2">2.7.2.3</ecNumber>
    </recommendedName>
    <alternativeName>
        <fullName>Period clock protein</fullName>
    </alternativeName>
</protein>
<accession>P36232</accession>
<evidence type="ECO:0000250" key="1"/>
<evidence type="ECO:0000250" key="2">
    <source>
        <dbReference type="UniProtKB" id="P00558"/>
    </source>
</evidence>
<evidence type="ECO:0000250" key="3">
    <source>
        <dbReference type="UniProtKB" id="Q7SIB7"/>
    </source>
</evidence>
<evidence type="ECO:0000305" key="4"/>
<organism>
    <name type="scientific">Scenedesmus fuscus</name>
    <name type="common">Green alga</name>
    <name type="synonym">Chlorella fusca</name>
    <dbReference type="NCBI Taxonomy" id="3073"/>
    <lineage>
        <taxon>Eukaryota</taxon>
        <taxon>Viridiplantae</taxon>
        <taxon>Chlorophyta</taxon>
        <taxon>core chlorophytes</taxon>
        <taxon>Chlorophyceae</taxon>
        <taxon>CS clade</taxon>
        <taxon>Sphaeropleales</taxon>
        <taxon>Scenedesmaceae</taxon>
        <taxon>Scenedesmus</taxon>
    </lineage>
</organism>
<reference key="1">
    <citation type="journal article" date="1994" name="J. Cell Sci.">
        <title>On the molecular mechanism of the circadian clock. The 41,000 M(r) clock protein of Chlorella was identified as 3-phosphoglycerate kinase.</title>
        <authorList>
            <person name="Walla O.J."/>
            <person name="De Groot E.J."/>
            <person name="Schweiger M."/>
        </authorList>
    </citation>
    <scope>PROTEIN SEQUENCE</scope>
    <source>
        <strain>NO 211-8B</strain>
    </source>
</reference>
<dbReference type="EC" id="2.7.2.3" evidence="2"/>
<dbReference type="UniPathway" id="UPA00116"/>
<dbReference type="GO" id="GO:0009507">
    <property type="term" value="C:chloroplast"/>
    <property type="evidence" value="ECO:0007669"/>
    <property type="project" value="UniProtKB-SubCell"/>
</dbReference>
<dbReference type="GO" id="GO:0005524">
    <property type="term" value="F:ATP binding"/>
    <property type="evidence" value="ECO:0007669"/>
    <property type="project" value="UniProtKB-KW"/>
</dbReference>
<dbReference type="GO" id="GO:0004618">
    <property type="term" value="F:phosphoglycerate kinase activity"/>
    <property type="evidence" value="ECO:0007669"/>
    <property type="project" value="UniProtKB-EC"/>
</dbReference>
<dbReference type="GO" id="GO:0006096">
    <property type="term" value="P:glycolytic process"/>
    <property type="evidence" value="ECO:0007669"/>
    <property type="project" value="InterPro"/>
</dbReference>
<dbReference type="GO" id="GO:0019253">
    <property type="term" value="P:reductive pentose-phosphate cycle"/>
    <property type="evidence" value="ECO:0007669"/>
    <property type="project" value="UniProtKB-UniPathway"/>
</dbReference>
<dbReference type="GO" id="GO:0048511">
    <property type="term" value="P:rhythmic process"/>
    <property type="evidence" value="ECO:0007669"/>
    <property type="project" value="UniProtKB-KW"/>
</dbReference>
<dbReference type="Gene3D" id="3.40.50.1260">
    <property type="entry name" value="Phosphoglycerate kinase, N-terminal domain"/>
    <property type="match status" value="1"/>
</dbReference>
<dbReference type="InterPro" id="IPR015911">
    <property type="entry name" value="Phosphoglycerate_kinase_CS"/>
</dbReference>
<dbReference type="InterPro" id="IPR015824">
    <property type="entry name" value="Phosphoglycerate_kinase_N"/>
</dbReference>
<dbReference type="InterPro" id="IPR036043">
    <property type="entry name" value="Phosphoglycerate_kinase_sf"/>
</dbReference>
<dbReference type="SUPFAM" id="SSF53748">
    <property type="entry name" value="Phosphoglycerate kinase"/>
    <property type="match status" value="1"/>
</dbReference>
<dbReference type="PROSITE" id="PS00111">
    <property type="entry name" value="PGLYCERATE_KINASE"/>
    <property type="match status" value="1"/>
</dbReference>
<name>PGKH_SCEFU</name>
<feature type="chain" id="PRO_0000145869" description="Phosphoglycerate kinase, chloroplastic">
    <location>
        <begin position="1"/>
        <end position="36" status="greater than"/>
    </location>
</feature>
<feature type="binding site" evidence="2">
    <location>
        <position position="22"/>
    </location>
    <ligand>
        <name>(2R)-3-phosphoglycerate</name>
        <dbReference type="ChEBI" id="CHEBI:58272"/>
    </ligand>
</feature>
<feature type="binding site" evidence="3">
    <location>
        <position position="23"/>
    </location>
    <ligand>
        <name>(2R)-3-phosphoglycerate</name>
        <dbReference type="ChEBI" id="CHEBI:58272"/>
    </ligand>
</feature>
<feature type="binding site" evidence="3">
    <location>
        <position position="25"/>
    </location>
    <ligand>
        <name>(2R)-3-phosphoglycerate</name>
        <dbReference type="ChEBI" id="CHEBI:58272"/>
    </ligand>
</feature>
<feature type="non-terminal residue">
    <location>
        <position position="36"/>
    </location>
</feature>
<proteinExistence type="evidence at protein level"/>
<sequence length="36" mass="3997">AKKSVGDLTKADLEGKRVFVRADLNVPLDKEQKXTD</sequence>